<evidence type="ECO:0000250" key="1"/>
<evidence type="ECO:0000305" key="2"/>
<organismHost>
    <name type="scientific">Homo sapiens</name>
    <name type="common">Human</name>
    <dbReference type="NCBI Taxonomy" id="9606"/>
</organismHost>
<keyword id="KW-1185">Reference proteome</keyword>
<keyword id="KW-0946">Virion</keyword>
<accession>Q0ZME2</accession>
<organism>
    <name type="scientific">Human coronavirus HKU1 (isolate N5)</name>
    <name type="common">HCoV-HKU1</name>
    <dbReference type="NCBI Taxonomy" id="443241"/>
    <lineage>
        <taxon>Viruses</taxon>
        <taxon>Riboviria</taxon>
        <taxon>Orthornavirae</taxon>
        <taxon>Pisuviricota</taxon>
        <taxon>Pisoniviricetes</taxon>
        <taxon>Nidovirales</taxon>
        <taxon>Cornidovirineae</taxon>
        <taxon>Coronaviridae</taxon>
        <taxon>Orthocoronavirinae</taxon>
        <taxon>Betacoronavirus</taxon>
        <taxon>Embecovirus</taxon>
        <taxon>Human coronavirus HKU1</taxon>
    </lineage>
</organism>
<reference key="1">
    <citation type="journal article" date="2006" name="J. Virol.">
        <title>Comparative analysis of 22 coronavirus HKU1 genomes reveals a novel genotype and evidence of natural recombination in coronavirus HKU1.</title>
        <authorList>
            <person name="Woo P.C.Y."/>
            <person name="Lau S.K.P."/>
            <person name="Yip C.C.Y."/>
            <person name="Huang Y."/>
            <person name="Tsoi H.-W."/>
            <person name="Chan K.-H."/>
            <person name="Yuen K.-Y."/>
        </authorList>
    </citation>
    <scope>NUCLEOTIDE SEQUENCE [GENOMIC RNA]</scope>
</reference>
<name>IORF_CVHN5</name>
<sequence>MLEVEAPLEIVQESSRKLLGLTNLSEAIKPIIEAENPNQNSLCLLNHKETLSHIIPGSLGLPNFKKVETLNFQMVKEYPLLTGYPLLKQKDIGINTTGVLLKQLMVNKSSCYQDGISTISVPVHMPVHPMVMPTKVSSGSLVTKLILLFPPMFRQGILLFKKLSLLGFRLVRFCLKAIMLKAQEGLLLIAGQVHVLNHVDPIIVH</sequence>
<comment type="function">
    <text evidence="1">Structural protein that is not essential for the viral replication either in tissue culture or in its natural host.</text>
</comment>
<comment type="subcellular location">
    <subcellularLocation>
        <location evidence="1">Virion</location>
    </subcellularLocation>
</comment>
<comment type="miscellaneous">
    <text>The gene encoding this protein is included within the N gene (alternative ORF).</text>
</comment>
<comment type="miscellaneous">
    <text>Isolate N2 belongs to genotype B.</text>
</comment>
<comment type="similarity">
    <text evidence="2">Belongs to the coronavirus I protein family.</text>
</comment>
<protein>
    <recommendedName>
        <fullName>Protein I</fullName>
    </recommendedName>
    <alternativeName>
        <fullName>Accessory protein N2</fullName>
    </alternativeName>
    <alternativeName>
        <fullName>N internal ORF protein</fullName>
        <shortName>IORF</shortName>
    </alternativeName>
    <alternativeName>
        <fullName>Orf8 protein</fullName>
    </alternativeName>
    <alternativeName>
        <fullName>Protein in nucleocapsid ORF</fullName>
    </alternativeName>
</protein>
<dbReference type="EMBL" id="DQ339101">
    <property type="protein sequence ID" value="ABC70724.1"/>
    <property type="molecule type" value="Genomic_RNA"/>
</dbReference>
<dbReference type="Proteomes" id="UP000001985">
    <property type="component" value="Genome"/>
</dbReference>
<dbReference type="GO" id="GO:0044423">
    <property type="term" value="C:virion component"/>
    <property type="evidence" value="ECO:0007669"/>
    <property type="project" value="UniProtKB-KW"/>
</dbReference>
<dbReference type="CDD" id="cd21662">
    <property type="entry name" value="embe-CoV_Protein-I_like"/>
    <property type="match status" value="1"/>
</dbReference>
<dbReference type="InterPro" id="IPR004876">
    <property type="entry name" value="Corona_nucI"/>
</dbReference>
<dbReference type="InterPro" id="IPR044311">
    <property type="entry name" value="N2-like_embe-CoV"/>
</dbReference>
<dbReference type="Pfam" id="PF03187">
    <property type="entry name" value="Corona_I"/>
    <property type="match status" value="1"/>
</dbReference>
<gene>
    <name type="primary">N</name>
    <name type="synonym">I</name>
    <name type="ORF">7b</name>
</gene>
<proteinExistence type="inferred from homology"/>
<feature type="chain" id="PRO_0000297766" description="Protein I">
    <location>
        <begin position="1"/>
        <end position="205"/>
    </location>
</feature>